<keyword id="KW-0064">Aspartyl protease</keyword>
<keyword id="KW-0997">Cell inner membrane</keyword>
<keyword id="KW-1003">Cell membrane</keyword>
<keyword id="KW-0378">Hydrolase</keyword>
<keyword id="KW-0472">Membrane</keyword>
<keyword id="KW-0645">Protease</keyword>
<keyword id="KW-1185">Reference proteome</keyword>
<keyword id="KW-0812">Transmembrane</keyword>
<keyword id="KW-1133">Transmembrane helix</keyword>
<organism>
    <name type="scientific">Anaeromyxobacter sp. (strain Fw109-5)</name>
    <dbReference type="NCBI Taxonomy" id="404589"/>
    <lineage>
        <taxon>Bacteria</taxon>
        <taxon>Pseudomonadati</taxon>
        <taxon>Myxococcota</taxon>
        <taxon>Myxococcia</taxon>
        <taxon>Myxococcales</taxon>
        <taxon>Cystobacterineae</taxon>
        <taxon>Anaeromyxobacteraceae</taxon>
        <taxon>Anaeromyxobacter</taxon>
    </lineage>
</organism>
<protein>
    <recommendedName>
        <fullName evidence="1">Lipoprotein signal peptidase</fullName>
        <ecNumber evidence="1">3.4.23.36</ecNumber>
    </recommendedName>
    <alternativeName>
        <fullName evidence="1">Prolipoprotein signal peptidase</fullName>
    </alternativeName>
    <alternativeName>
        <fullName evidence="1">Signal peptidase II</fullName>
        <shortName evidence="1">SPase II</shortName>
    </alternativeName>
</protein>
<proteinExistence type="inferred from homology"/>
<dbReference type="EC" id="3.4.23.36" evidence="1"/>
<dbReference type="EMBL" id="CP000769">
    <property type="protein sequence ID" value="ABS24234.1"/>
    <property type="molecule type" value="Genomic_DNA"/>
</dbReference>
<dbReference type="RefSeq" id="WP_011984340.1">
    <property type="nucleotide sequence ID" value="NC_009675.1"/>
</dbReference>
<dbReference type="SMR" id="A7H688"/>
<dbReference type="STRING" id="404589.Anae109_0014"/>
<dbReference type="KEGG" id="afw:Anae109_0014"/>
<dbReference type="eggNOG" id="COG0597">
    <property type="taxonomic scope" value="Bacteria"/>
</dbReference>
<dbReference type="HOGENOM" id="CLU_083252_3_1_7"/>
<dbReference type="OrthoDB" id="9810259at2"/>
<dbReference type="UniPathway" id="UPA00665"/>
<dbReference type="Proteomes" id="UP000006382">
    <property type="component" value="Chromosome"/>
</dbReference>
<dbReference type="GO" id="GO:0005886">
    <property type="term" value="C:plasma membrane"/>
    <property type="evidence" value="ECO:0007669"/>
    <property type="project" value="UniProtKB-SubCell"/>
</dbReference>
<dbReference type="GO" id="GO:0004190">
    <property type="term" value="F:aspartic-type endopeptidase activity"/>
    <property type="evidence" value="ECO:0007669"/>
    <property type="project" value="UniProtKB-UniRule"/>
</dbReference>
<dbReference type="GO" id="GO:0006508">
    <property type="term" value="P:proteolysis"/>
    <property type="evidence" value="ECO:0007669"/>
    <property type="project" value="UniProtKB-KW"/>
</dbReference>
<dbReference type="HAMAP" id="MF_00161">
    <property type="entry name" value="LspA"/>
    <property type="match status" value="1"/>
</dbReference>
<dbReference type="InterPro" id="IPR001872">
    <property type="entry name" value="Peptidase_A8"/>
</dbReference>
<dbReference type="NCBIfam" id="TIGR00077">
    <property type="entry name" value="lspA"/>
    <property type="match status" value="1"/>
</dbReference>
<dbReference type="NCBIfam" id="NF011355">
    <property type="entry name" value="PRK14773.1"/>
    <property type="match status" value="1"/>
</dbReference>
<dbReference type="PANTHER" id="PTHR33695">
    <property type="entry name" value="LIPOPROTEIN SIGNAL PEPTIDASE"/>
    <property type="match status" value="1"/>
</dbReference>
<dbReference type="PANTHER" id="PTHR33695:SF1">
    <property type="entry name" value="LIPOPROTEIN SIGNAL PEPTIDASE"/>
    <property type="match status" value="1"/>
</dbReference>
<dbReference type="Pfam" id="PF01252">
    <property type="entry name" value="Peptidase_A8"/>
    <property type="match status" value="1"/>
</dbReference>
<dbReference type="PRINTS" id="PR00781">
    <property type="entry name" value="LIPOSIGPTASE"/>
</dbReference>
<dbReference type="PROSITE" id="PS00855">
    <property type="entry name" value="SPASE_II"/>
    <property type="match status" value="1"/>
</dbReference>
<feature type="chain" id="PRO_1000123479" description="Lipoprotein signal peptidase">
    <location>
        <begin position="1"/>
        <end position="211"/>
    </location>
</feature>
<feature type="transmembrane region" description="Helical" evidence="1">
    <location>
        <begin position="12"/>
        <end position="32"/>
    </location>
</feature>
<feature type="transmembrane region" description="Helical" evidence="1">
    <location>
        <begin position="96"/>
        <end position="116"/>
    </location>
</feature>
<feature type="transmembrane region" description="Helical" evidence="1">
    <location>
        <begin position="127"/>
        <end position="147"/>
    </location>
</feature>
<feature type="transmembrane region" description="Helical" evidence="1">
    <location>
        <begin position="167"/>
        <end position="187"/>
    </location>
</feature>
<feature type="active site" evidence="1">
    <location>
        <position position="153"/>
    </location>
</feature>
<feature type="active site" evidence="1">
    <location>
        <position position="174"/>
    </location>
</feature>
<accession>A7H688</accession>
<comment type="function">
    <text evidence="1">This protein specifically catalyzes the removal of signal peptides from prolipoproteins.</text>
</comment>
<comment type="catalytic activity">
    <reaction evidence="1">
        <text>Release of signal peptides from bacterial membrane prolipoproteins. Hydrolyzes -Xaa-Yaa-Zaa-|-(S,diacylglyceryl)Cys-, in which Xaa is hydrophobic (preferably Leu), and Yaa (Ala or Ser) and Zaa (Gly or Ala) have small, neutral side chains.</text>
        <dbReference type="EC" id="3.4.23.36"/>
    </reaction>
</comment>
<comment type="pathway">
    <text evidence="1">Protein modification; lipoprotein biosynthesis (signal peptide cleavage).</text>
</comment>
<comment type="subcellular location">
    <subcellularLocation>
        <location evidence="1">Cell inner membrane</location>
        <topology evidence="1">Multi-pass membrane protein</topology>
    </subcellularLocation>
</comment>
<comment type="similarity">
    <text evidence="1">Belongs to the peptidase A8 family.</text>
</comment>
<name>LSPA_ANADF</name>
<sequence length="211" mass="23918">MSARRPFSKWALLALLFVTLVAIDQWTKYLAVERLTTLFERTGAETLGERLAGFLEHQHLEPISTDPYYVWRPVWRMNYVENPGAAWGLFRGHSEAFRNGFFTLVSLGAVAFILHYYRKLRAEQRYLQVALALVLSGAVGNFLDRLARGYVIDFIEWYWWNRPDIRWPTFNIADSLIVVGVALLVLHPGSGKAAQKAGADAEGDRRASTGG</sequence>
<reference key="1">
    <citation type="journal article" date="2015" name="Genome Announc.">
        <title>Complete genome sequence of Anaeromyxobacter sp. Fw109-5, an anaerobic, metal-reducing bacterium isolated from a contaminated subsurface environment.</title>
        <authorList>
            <person name="Hwang C."/>
            <person name="Copeland A."/>
            <person name="Lucas S."/>
            <person name="Lapidus A."/>
            <person name="Barry K."/>
            <person name="Glavina Del Rio T."/>
            <person name="Dalin E."/>
            <person name="Tice H."/>
            <person name="Pitluck S."/>
            <person name="Sims D."/>
            <person name="Brettin T."/>
            <person name="Bruce D.C."/>
            <person name="Detter J.C."/>
            <person name="Han C.S."/>
            <person name="Schmutz J."/>
            <person name="Larimer F.W."/>
            <person name="Land M.L."/>
            <person name="Hauser L.J."/>
            <person name="Kyrpides N."/>
            <person name="Lykidis A."/>
            <person name="Richardson P."/>
            <person name="Belieav A."/>
            <person name="Sanford R.A."/>
            <person name="Loeffler F.E."/>
            <person name="Fields M.W."/>
        </authorList>
    </citation>
    <scope>NUCLEOTIDE SEQUENCE [LARGE SCALE GENOMIC DNA]</scope>
    <source>
        <strain>Fw109-5</strain>
    </source>
</reference>
<gene>
    <name evidence="1" type="primary">lspA</name>
    <name type="ordered locus">Anae109_0014</name>
</gene>
<evidence type="ECO:0000255" key="1">
    <source>
        <dbReference type="HAMAP-Rule" id="MF_00161"/>
    </source>
</evidence>